<keyword id="KW-0256">Endoplasmic reticulum</keyword>
<keyword id="KW-0328">Glycosyltransferase</keyword>
<keyword id="KW-0337">GPI-anchor biosynthesis</keyword>
<keyword id="KW-0472">Membrane</keyword>
<keyword id="KW-1185">Reference proteome</keyword>
<keyword id="KW-0808">Transferase</keyword>
<keyword id="KW-0812">Transmembrane</keyword>
<keyword id="KW-1133">Transmembrane helix</keyword>
<proteinExistence type="evidence at protein level"/>
<protein>
    <recommendedName>
        <fullName>Phosphatidylinositol N-acetylglucosaminyltransferase GPI3 subunit</fullName>
        <shortName>GPI-GlcNAc transferase complex subunit GPI3</shortName>
        <shortName>GPI-GnT subunit GPI3</shortName>
        <ecNumber evidence="8">2.4.1.198</ecNumber>
    </recommendedName>
    <alternativeName>
        <fullName>GlcNAc-PI synthesis protein</fullName>
    </alternativeName>
</protein>
<name>GPI3_YEAST</name>
<evidence type="ECO:0000255" key="1"/>
<evidence type="ECO:0000269" key="2">
    <source>
    </source>
</evidence>
<evidence type="ECO:0000269" key="3">
    <source>
    </source>
</evidence>
<evidence type="ECO:0000269" key="4">
    <source>
    </source>
</evidence>
<evidence type="ECO:0000269" key="5">
    <source>
    </source>
</evidence>
<evidence type="ECO:0000269" key="6">
    <source>
    </source>
</evidence>
<evidence type="ECO:0000305" key="7"/>
<evidence type="ECO:0000305" key="8">
    <source>
    </source>
</evidence>
<evidence type="ECO:0000305" key="9">
    <source>
    </source>
</evidence>
<evidence type="ECO:0000305" key="10">
    <source>
    </source>
</evidence>
<gene>
    <name type="primary">SPT14</name>
    <name type="synonym">CWH6</name>
    <name type="synonym">GPI3</name>
    <name type="ordered locus">YPL175W</name>
    <name type="ORF">P2269</name>
</gene>
<comment type="function">
    <text evidence="2 6">Catalytic subunit in the complex catalyzing the transfer of N-acetylglucosamine from UDP-N-acetylglucosamine to phosphatidylinositol, the first step of GPI biosynthesis.</text>
</comment>
<comment type="catalytic activity">
    <reaction evidence="8">
        <text>a 1,2-diacyl-sn-glycero-3-phospho-(1D-myo-inositol) + UDP-N-acetyl-alpha-D-glucosamine = a 6-(N-acetyl-alpha-D-glucosaminyl)-1-(1,2-diacyl-sn-glycero-3-phospho)-1D-myo-inositol + UDP + H(+)</text>
        <dbReference type="Rhea" id="RHEA:14789"/>
        <dbReference type="ChEBI" id="CHEBI:15378"/>
        <dbReference type="ChEBI" id="CHEBI:57265"/>
        <dbReference type="ChEBI" id="CHEBI:57705"/>
        <dbReference type="ChEBI" id="CHEBI:57880"/>
        <dbReference type="ChEBI" id="CHEBI:58223"/>
        <dbReference type="EC" id="2.4.1.198"/>
    </reaction>
    <physiologicalReaction direction="left-to-right" evidence="8">
        <dbReference type="Rhea" id="RHEA:14790"/>
    </physiologicalReaction>
</comment>
<comment type="activity regulation">
    <text evidence="5">Inhibited by Ras, probably via the interaction between RAS2 and ERI1.</text>
</comment>
<comment type="pathway">
    <text evidence="10">Glycolipid biosynthesis; glycosylphosphatidylinositol-anchor biosynthesis.</text>
</comment>
<comment type="subunit">
    <text evidence="8">Component of the phosphatidylinositol N-acetylglucosaminyltransferase (GPI-GlcNAc transferase) complex composed of at least GPI1, GPI2, GPI3, GPI15, GPI19 and ERI1.</text>
</comment>
<comment type="subcellular location">
    <subcellularLocation>
        <location evidence="7">Endoplasmic reticulum membrane</location>
        <topology evidence="7">Single-pass membrane protein</topology>
    </subcellularLocation>
</comment>
<comment type="miscellaneous">
    <text evidence="3">Present with 1480 molecules/cell in log phase SD medium.</text>
</comment>
<comment type="similarity">
    <text evidence="7">Belongs to the glycosyltransferase group 1 family. Glycosyltransferase 4 subfamily.</text>
</comment>
<comment type="caution">
    <text evidence="9">Was originally thought to be involved in transcription.</text>
</comment>
<comment type="sequence caution" evidence="7">
    <conflict type="erroneous gene model prediction">
        <sequence resource="EMBL-CDS" id="CAA97882"/>
    </conflict>
</comment>
<organism>
    <name type="scientific">Saccharomyces cerevisiae (strain ATCC 204508 / S288c)</name>
    <name type="common">Baker's yeast</name>
    <dbReference type="NCBI Taxonomy" id="559292"/>
    <lineage>
        <taxon>Eukaryota</taxon>
        <taxon>Fungi</taxon>
        <taxon>Dikarya</taxon>
        <taxon>Ascomycota</taxon>
        <taxon>Saccharomycotina</taxon>
        <taxon>Saccharomycetes</taxon>
        <taxon>Saccharomycetales</taxon>
        <taxon>Saccharomycetaceae</taxon>
        <taxon>Saccharomyces</taxon>
    </lineage>
</organism>
<dbReference type="EC" id="2.4.1.198" evidence="8"/>
<dbReference type="EMBL" id="X63290">
    <property type="protein sequence ID" value="CAA44924.1"/>
    <property type="molecule type" value="Genomic_DNA"/>
</dbReference>
<dbReference type="EMBL" id="Z73531">
    <property type="protein sequence ID" value="CAA97882.1"/>
    <property type="status" value="ALT_SEQ"/>
    <property type="molecule type" value="Genomic_DNA"/>
</dbReference>
<dbReference type="EMBL" id="BK006949">
    <property type="protein sequence ID" value="DAA11259.1"/>
    <property type="molecule type" value="Genomic_DNA"/>
</dbReference>
<dbReference type="PIR" id="S65187">
    <property type="entry name" value="S65187"/>
</dbReference>
<dbReference type="RefSeq" id="NP_015150.2">
    <property type="nucleotide sequence ID" value="NM_001183989.1"/>
</dbReference>
<dbReference type="SMR" id="P32363"/>
<dbReference type="BioGRID" id="36008">
    <property type="interactions" value="69"/>
</dbReference>
<dbReference type="ComplexPortal" id="CPX-1274">
    <property type="entry name" value="Glycosylphosphatidylinositol-N-acetylglucosaminyltransferase complex"/>
</dbReference>
<dbReference type="DIP" id="DIP-1834N"/>
<dbReference type="FunCoup" id="P32363">
    <property type="interactions" value="571"/>
</dbReference>
<dbReference type="IntAct" id="P32363">
    <property type="interactions" value="3"/>
</dbReference>
<dbReference type="MINT" id="P32363"/>
<dbReference type="STRING" id="4932.YPL175W"/>
<dbReference type="CAZy" id="GT4">
    <property type="family name" value="Glycosyltransferase Family 4"/>
</dbReference>
<dbReference type="iPTMnet" id="P32363"/>
<dbReference type="PaxDb" id="4932-YPL175W"/>
<dbReference type="PeptideAtlas" id="P32363"/>
<dbReference type="EnsemblFungi" id="YPL175W_mRNA">
    <property type="protein sequence ID" value="YPL175W"/>
    <property type="gene ID" value="YPL175W"/>
</dbReference>
<dbReference type="GeneID" id="855928"/>
<dbReference type="KEGG" id="sce:YPL175W"/>
<dbReference type="AGR" id="SGD:S000006096"/>
<dbReference type="SGD" id="S000006096">
    <property type="gene designation" value="SPT14"/>
</dbReference>
<dbReference type="VEuPathDB" id="FungiDB:YPL175W"/>
<dbReference type="eggNOG" id="KOG1111">
    <property type="taxonomic scope" value="Eukaryota"/>
</dbReference>
<dbReference type="GeneTree" id="ENSGT00390000014405"/>
<dbReference type="HOGENOM" id="CLU_009583_19_0_1"/>
<dbReference type="InParanoid" id="P32363"/>
<dbReference type="OMA" id="SHFWMSG"/>
<dbReference type="OrthoDB" id="734129at2759"/>
<dbReference type="BioCyc" id="YEAST:G3O-34070-MONOMER"/>
<dbReference type="UniPathway" id="UPA00196"/>
<dbReference type="BioGRID-ORCS" id="855928">
    <property type="hits" value="0 hits in 10 CRISPR screens"/>
</dbReference>
<dbReference type="PRO" id="PR:P32363"/>
<dbReference type="Proteomes" id="UP000002311">
    <property type="component" value="Chromosome XVI"/>
</dbReference>
<dbReference type="RNAct" id="P32363">
    <property type="molecule type" value="protein"/>
</dbReference>
<dbReference type="GO" id="GO:0005829">
    <property type="term" value="C:cytosol"/>
    <property type="evidence" value="ECO:0007005"/>
    <property type="project" value="SGD"/>
</dbReference>
<dbReference type="GO" id="GO:0005783">
    <property type="term" value="C:endoplasmic reticulum"/>
    <property type="evidence" value="ECO:0000315"/>
    <property type="project" value="SGD"/>
</dbReference>
<dbReference type="GO" id="GO:0005789">
    <property type="term" value="C:endoplasmic reticulum membrane"/>
    <property type="evidence" value="ECO:0000303"/>
    <property type="project" value="ComplexPortal"/>
</dbReference>
<dbReference type="GO" id="GO:0000506">
    <property type="term" value="C:glycosylphosphatidylinositol-N-acetylglucosaminyltransferase (GPI-GnT) complex"/>
    <property type="evidence" value="ECO:0000318"/>
    <property type="project" value="GO_Central"/>
</dbReference>
<dbReference type="GO" id="GO:0017176">
    <property type="term" value="F:phosphatidylinositol N-acetylglucosaminyltransferase activity"/>
    <property type="evidence" value="ECO:0000315"/>
    <property type="project" value="SGD"/>
</dbReference>
<dbReference type="GO" id="GO:0031505">
    <property type="term" value="P:fungal-type cell wall organization"/>
    <property type="evidence" value="ECO:0000303"/>
    <property type="project" value="ComplexPortal"/>
</dbReference>
<dbReference type="GO" id="GO:0006506">
    <property type="term" value="P:GPI anchor biosynthetic process"/>
    <property type="evidence" value="ECO:0000318"/>
    <property type="project" value="GO_Central"/>
</dbReference>
<dbReference type="CDD" id="cd03796">
    <property type="entry name" value="GT4_PIG-A-like"/>
    <property type="match status" value="1"/>
</dbReference>
<dbReference type="FunFam" id="3.40.50.2000:FF:000276">
    <property type="entry name" value="Phosphatidylinositol N-acetylglucosaminyltransferase GPI3 subunit"/>
    <property type="match status" value="1"/>
</dbReference>
<dbReference type="FunFam" id="3.40.50.2000:FF:000026">
    <property type="entry name" value="Phosphatidylinositol N-acetylglucosaminyltransferase subunit A"/>
    <property type="match status" value="1"/>
</dbReference>
<dbReference type="Gene3D" id="3.40.50.2000">
    <property type="entry name" value="Glycogen Phosphorylase B"/>
    <property type="match status" value="2"/>
</dbReference>
<dbReference type="InterPro" id="IPR001296">
    <property type="entry name" value="Glyco_trans_1"/>
</dbReference>
<dbReference type="InterPro" id="IPR039507">
    <property type="entry name" value="PIG-A/GPI3"/>
</dbReference>
<dbReference type="InterPro" id="IPR013234">
    <property type="entry name" value="PIGA_GPI_anchor_biosynthesis"/>
</dbReference>
<dbReference type="PANTHER" id="PTHR45871">
    <property type="entry name" value="N-ACETYLGLUCOSAMINYL-PHOSPHATIDYLINOSITOL BIOSYNTHETIC PROTEIN"/>
    <property type="match status" value="1"/>
</dbReference>
<dbReference type="PANTHER" id="PTHR45871:SF1">
    <property type="entry name" value="PHOSPHATIDYLINOSITOL N-ACETYLGLUCOSAMINYLTRANSFERASE SUBUNIT A"/>
    <property type="match status" value="1"/>
</dbReference>
<dbReference type="Pfam" id="PF00534">
    <property type="entry name" value="Glycos_transf_1"/>
    <property type="match status" value="1"/>
</dbReference>
<dbReference type="Pfam" id="PF08288">
    <property type="entry name" value="PIGA"/>
    <property type="match status" value="1"/>
</dbReference>
<dbReference type="SUPFAM" id="SSF53756">
    <property type="entry name" value="UDP-Glycosyltransferase/glycogen phosphorylase"/>
    <property type="match status" value="1"/>
</dbReference>
<sequence>MGFNIAMLCDFFYPQLGGVEFHIYHLSQKLIDLGHSVVIITHAYKDRVGVRHLTNGLKVYHVPFFVIFRETTFPTVFSTFPIIRNILLREQIQIVHSHGSASTFAHEGILHANTMGLRTVFTDHSLYGFNNLTSIWVNKLLTFTLTNIDRVICVSNTCKENMIVRTELSPDIISVIPNAVVSEDFKPRDPTGGTKRKQSRDKIVIVVIGRLFPNKGSDLLTRIIPKVCSSHEDVEFIVAGDGPKFIDFQQMIESHRLQKRVQLLGSVPHEKVRDVLCQGDIYLHASLTEAFGTILVEAASCNLLIVTTQVGGIPEVLPNEMTVYAEQTSVSDLVQATNKAINIIRSKALDTSSFHDSVSKMYDWMDVAKRTVEIYTNISSTSSADDKDWMKMVANLYKRDGIWAKHLYLLCGIVEYMLFFLLEWLYPRDEIDLAPKWPKKTVSNETKEARET</sequence>
<reference key="1">
    <citation type="journal article" date="1991" name="Mol. Gen. Genet.">
        <title>The Saccharomyces cerevisiae SPT14 gene is essential for normal expression of the yeast transposon, Ty, as well as for expression of the HIS4 gene and several genes in the mating pathway.</title>
        <authorList>
            <person name="Fassler J.S."/>
            <person name="Gray W."/>
            <person name="Lee J.P."/>
            <person name="Yu G."/>
            <person name="Gingerich G."/>
        </authorList>
    </citation>
    <scope>NUCLEOTIDE SEQUENCE [GENOMIC DNA]</scope>
    <source>
        <strain>ATCC 204508 / S288c</strain>
    </source>
</reference>
<reference key="2">
    <citation type="submission" date="1992-01" db="EMBL/GenBank/DDBJ databases">
        <authorList>
            <person name="Fassler J.S."/>
        </authorList>
    </citation>
    <scope>SEQUENCE REVISION</scope>
</reference>
<reference key="3">
    <citation type="journal article" date="1997" name="Nature">
        <title>The nucleotide sequence of Saccharomyces cerevisiae chromosome XVI.</title>
        <authorList>
            <person name="Bussey H."/>
            <person name="Storms R.K."/>
            <person name="Ahmed A."/>
            <person name="Albermann K."/>
            <person name="Allen E."/>
            <person name="Ansorge W."/>
            <person name="Araujo R."/>
            <person name="Aparicio A."/>
            <person name="Barrell B.G."/>
            <person name="Badcock K."/>
            <person name="Benes V."/>
            <person name="Botstein D."/>
            <person name="Bowman S."/>
            <person name="Brueckner M."/>
            <person name="Carpenter J."/>
            <person name="Cherry J.M."/>
            <person name="Chung E."/>
            <person name="Churcher C.M."/>
            <person name="Coster F."/>
            <person name="Davis K."/>
            <person name="Davis R.W."/>
            <person name="Dietrich F.S."/>
            <person name="Delius H."/>
            <person name="DiPaolo T."/>
            <person name="Dubois E."/>
            <person name="Duesterhoeft A."/>
            <person name="Duncan M."/>
            <person name="Floeth M."/>
            <person name="Fortin N."/>
            <person name="Friesen J.D."/>
            <person name="Fritz C."/>
            <person name="Goffeau A."/>
            <person name="Hall J."/>
            <person name="Hebling U."/>
            <person name="Heumann K."/>
            <person name="Hilbert H."/>
            <person name="Hillier L.W."/>
            <person name="Hunicke-Smith S."/>
            <person name="Hyman R.W."/>
            <person name="Johnston M."/>
            <person name="Kalman S."/>
            <person name="Kleine K."/>
            <person name="Komp C."/>
            <person name="Kurdi O."/>
            <person name="Lashkari D."/>
            <person name="Lew H."/>
            <person name="Lin A."/>
            <person name="Lin D."/>
            <person name="Louis E.J."/>
            <person name="Marathe R."/>
            <person name="Messenguy F."/>
            <person name="Mewes H.-W."/>
            <person name="Mirtipati S."/>
            <person name="Moestl D."/>
            <person name="Mueller-Auer S."/>
            <person name="Namath A."/>
            <person name="Nentwich U."/>
            <person name="Oefner P."/>
            <person name="Pearson D."/>
            <person name="Petel F.X."/>
            <person name="Pohl T.M."/>
            <person name="Purnelle B."/>
            <person name="Rajandream M.A."/>
            <person name="Rechmann S."/>
            <person name="Rieger M."/>
            <person name="Riles L."/>
            <person name="Roberts D."/>
            <person name="Schaefer M."/>
            <person name="Scharfe M."/>
            <person name="Scherens B."/>
            <person name="Schramm S."/>
            <person name="Schroeder M."/>
            <person name="Sdicu A.-M."/>
            <person name="Tettelin H."/>
            <person name="Urrestarazu L.A."/>
            <person name="Ushinsky S."/>
            <person name="Vierendeels F."/>
            <person name="Vissers S."/>
            <person name="Voss H."/>
            <person name="Walsh S.V."/>
            <person name="Wambutt R."/>
            <person name="Wang Y."/>
            <person name="Wedler E."/>
            <person name="Wedler H."/>
            <person name="Winnett E."/>
            <person name="Zhong W.-W."/>
            <person name="Zollner A."/>
            <person name="Vo D.H."/>
            <person name="Hani J."/>
        </authorList>
    </citation>
    <scope>NUCLEOTIDE SEQUENCE [LARGE SCALE GENOMIC DNA]</scope>
    <source>
        <strain>ATCC 204508 / S288c</strain>
    </source>
</reference>
<reference key="4">
    <citation type="journal article" date="2014" name="G3 (Bethesda)">
        <title>The reference genome sequence of Saccharomyces cerevisiae: Then and now.</title>
        <authorList>
            <person name="Engel S.R."/>
            <person name="Dietrich F.S."/>
            <person name="Fisk D.G."/>
            <person name="Binkley G."/>
            <person name="Balakrishnan R."/>
            <person name="Costanzo M.C."/>
            <person name="Dwight S.S."/>
            <person name="Hitz B.C."/>
            <person name="Karra K."/>
            <person name="Nash R.S."/>
            <person name="Weng S."/>
            <person name="Wong E.D."/>
            <person name="Lloyd P."/>
            <person name="Skrzypek M.S."/>
            <person name="Miyasato S.R."/>
            <person name="Simison M."/>
            <person name="Cherry J.M."/>
        </authorList>
    </citation>
    <scope>GENOME REANNOTATION</scope>
    <source>
        <strain>ATCC 204508 / S288c</strain>
    </source>
</reference>
<reference key="5">
    <citation type="journal article" date="1995" name="EMBO J.">
        <title>The yeast spt14 gene is homologous to the human PIG-A gene and is required for GPI anchor synthesis.</title>
        <authorList>
            <person name="Schoenbaechler M."/>
            <person name="Horvath A."/>
            <person name="Fassler J.S."/>
            <person name="Riezman H."/>
        </authorList>
    </citation>
    <scope>CHARACTERIZATION</scope>
</reference>
<reference key="6">
    <citation type="journal article" date="1995" name="J. Biol. Chem.">
        <title>Temperature-sensitive yeast GPI anchoring mutants gpi2 and gpi3 are defective in the synthesis of N-acetylglucosaminyl phosphatidylinositol. Cloning of the GPI2 gene.</title>
        <authorList>
            <person name="Leidich S.D."/>
            <person name="Kostova Z."/>
            <person name="Latek R.R."/>
            <person name="Costello L.C."/>
            <person name="Drapp D.A."/>
            <person name="Gray W."/>
            <person name="Fassler J.S."/>
            <person name="Orlean P."/>
        </authorList>
    </citation>
    <scope>FUNCTION</scope>
</reference>
<reference key="7">
    <citation type="journal article" date="2000" name="Biochem. J.">
        <title>Photoaffinity labelling with P3-(4-azidoanilido)uridine 5'-triphosphate identifies gpi3p as the UDP-GlcNAc-binding subunit of the enzyme that catalyses formation of GlcNAc-phosphatidylinositol, the first glycolipid intermediate in glycosylphosphatidylinositol synthesis.</title>
        <authorList>
            <person name="Kostova Z."/>
            <person name="Rancour D.M."/>
            <person name="Menon A.K."/>
            <person name="Orlean P."/>
        </authorList>
    </citation>
    <scope>FUNCTION</scope>
    <scope>CATALYTIC ACTIVITY</scope>
    <scope>SUBSTRATE BINDING</scope>
</reference>
<reference key="8">
    <citation type="journal article" date="2000" name="Nucleic Acids Res.">
        <title>Test of intron predictions reveals novel splice sites, alternatively spliced mRNAs and new introns in meiotically regulated genes of yeast.</title>
        <authorList>
            <person name="Davis C.A."/>
            <person name="Grate L."/>
            <person name="Spingola M."/>
            <person name="Ares M. Jr."/>
        </authorList>
    </citation>
    <scope>IDENTIFICATION OF INTRON</scope>
</reference>
<reference key="9">
    <citation type="journal article" date="2003" name="Eur. J. Biochem.">
        <title>Comparative importance in vivo of conserved glutamate residues in the EX7E motif retaining glycosyltransferase Gpi3p, the UDP-GlcNAc-binding subunit of the first enzyme in glycosylphosphatidylinositol assembly.</title>
        <authorList>
            <person name="Kostova Z."/>
            <person name="Yan B.C."/>
            <person name="Vainauskas S."/>
            <person name="Schwartz R."/>
            <person name="Menon A.K."/>
            <person name="Orlean P."/>
        </authorList>
    </citation>
    <scope>MUTAGENESIS OF GLU-289; GLU-297 AND CYS-301</scope>
</reference>
<reference key="10">
    <citation type="journal article" date="2003" name="Nature">
        <title>Global analysis of protein expression in yeast.</title>
        <authorList>
            <person name="Ghaemmaghami S."/>
            <person name="Huh W.-K."/>
            <person name="Bower K."/>
            <person name="Howson R.W."/>
            <person name="Belle A."/>
            <person name="Dephoure N."/>
            <person name="O'Shea E.K."/>
            <person name="Weissman J.S."/>
        </authorList>
    </citation>
    <scope>LEVEL OF PROTEIN EXPRESSION [LARGE SCALE ANALYSIS]</scope>
</reference>
<reference key="11">
    <citation type="journal article" date="2004" name="Cell">
        <title>Yeast Ras regulates the complex that catalyzes the first step in GPI-anchor biosynthesis at the ER.</title>
        <authorList>
            <person name="Sobering A.K."/>
            <person name="Watanabe R."/>
            <person name="Romeo M.J."/>
            <person name="Yan B.C."/>
            <person name="Specht C.A."/>
            <person name="Orlean P."/>
            <person name="Riezman H."/>
            <person name="Levin D.E."/>
        </authorList>
    </citation>
    <scope>ACTIVITY REGULATION</scope>
</reference>
<accession>P32363</accession>
<accession>D6W3J3</accession>
<accession>Q08918</accession>
<feature type="chain" id="PRO_0000080325" description="Phosphatidylinositol N-acetylglucosaminyltransferase GPI3 subunit">
    <location>
        <begin position="1"/>
        <end position="452"/>
    </location>
</feature>
<feature type="transmembrane region" description="Helical" evidence="1">
    <location>
        <begin position="407"/>
        <end position="427"/>
    </location>
</feature>
<feature type="mutagenesis site" description="Severe growth defect." evidence="4">
    <original>E</original>
    <variation>A</variation>
    <location>
        <position position="289"/>
    </location>
</feature>
<feature type="mutagenesis site" description="Reduces the transferase reaction 12-fold." evidence="4">
    <original>E</original>
    <variation>D</variation>
    <location>
        <position position="289"/>
    </location>
</feature>
<feature type="mutagenesis site" description="Lethal." evidence="4">
    <original>E</original>
    <variation>G</variation>
    <location>
        <position position="289"/>
    </location>
</feature>
<feature type="mutagenesis site" description="Lethal." evidence="4">
    <original>E</original>
    <variation>A</variation>
    <variation>G</variation>
    <location>
        <position position="297"/>
    </location>
</feature>
<feature type="mutagenesis site" description="No transferase activity." evidence="4">
    <original>E</original>
    <variation>D</variation>
    <location>
        <position position="297"/>
    </location>
</feature>
<feature type="mutagenesis site" description="Reduces the transferase reaction 5-fold." evidence="4">
    <original>C</original>
    <variation>A</variation>
    <location>
        <position position="301"/>
    </location>
</feature>